<evidence type="ECO:0000255" key="1">
    <source>
        <dbReference type="HAMAP-Rule" id="MF_00023"/>
    </source>
</evidence>
<evidence type="ECO:0000256" key="2">
    <source>
        <dbReference type="SAM" id="MobiDB-lite"/>
    </source>
</evidence>
<protein>
    <recommendedName>
        <fullName evidence="1">SsrA-binding protein</fullName>
    </recommendedName>
    <alternativeName>
        <fullName evidence="1">Small protein B</fullName>
    </alternativeName>
</protein>
<organism>
    <name type="scientific">Nitrobacter hamburgensis (strain DSM 10229 / NCIMB 13809 / X14)</name>
    <dbReference type="NCBI Taxonomy" id="323097"/>
    <lineage>
        <taxon>Bacteria</taxon>
        <taxon>Pseudomonadati</taxon>
        <taxon>Pseudomonadota</taxon>
        <taxon>Alphaproteobacteria</taxon>
        <taxon>Hyphomicrobiales</taxon>
        <taxon>Nitrobacteraceae</taxon>
        <taxon>Nitrobacter</taxon>
    </lineage>
</organism>
<dbReference type="EMBL" id="CP000319">
    <property type="protein sequence ID" value="ABE63052.1"/>
    <property type="molecule type" value="Genomic_DNA"/>
</dbReference>
<dbReference type="RefSeq" id="WP_011510729.1">
    <property type="nucleotide sequence ID" value="NC_007964.1"/>
</dbReference>
<dbReference type="SMR" id="Q1QL45"/>
<dbReference type="STRING" id="323097.Nham_2260"/>
<dbReference type="KEGG" id="nha:Nham_2260"/>
<dbReference type="eggNOG" id="COG0691">
    <property type="taxonomic scope" value="Bacteria"/>
</dbReference>
<dbReference type="HOGENOM" id="CLU_108953_0_1_5"/>
<dbReference type="OrthoDB" id="9805462at2"/>
<dbReference type="Proteomes" id="UP000001953">
    <property type="component" value="Chromosome"/>
</dbReference>
<dbReference type="GO" id="GO:0005829">
    <property type="term" value="C:cytosol"/>
    <property type="evidence" value="ECO:0007669"/>
    <property type="project" value="TreeGrafter"/>
</dbReference>
<dbReference type="GO" id="GO:0003723">
    <property type="term" value="F:RNA binding"/>
    <property type="evidence" value="ECO:0007669"/>
    <property type="project" value="UniProtKB-UniRule"/>
</dbReference>
<dbReference type="GO" id="GO:0070929">
    <property type="term" value="P:trans-translation"/>
    <property type="evidence" value="ECO:0007669"/>
    <property type="project" value="UniProtKB-UniRule"/>
</dbReference>
<dbReference type="CDD" id="cd09294">
    <property type="entry name" value="SmpB"/>
    <property type="match status" value="1"/>
</dbReference>
<dbReference type="Gene3D" id="2.40.280.10">
    <property type="match status" value="1"/>
</dbReference>
<dbReference type="HAMAP" id="MF_00023">
    <property type="entry name" value="SmpB"/>
    <property type="match status" value="1"/>
</dbReference>
<dbReference type="InterPro" id="IPR023620">
    <property type="entry name" value="SmpB"/>
</dbReference>
<dbReference type="InterPro" id="IPR000037">
    <property type="entry name" value="SsrA-bd_prot"/>
</dbReference>
<dbReference type="InterPro" id="IPR020081">
    <property type="entry name" value="SsrA-bd_prot_CS"/>
</dbReference>
<dbReference type="NCBIfam" id="NF003843">
    <property type="entry name" value="PRK05422.1"/>
    <property type="match status" value="1"/>
</dbReference>
<dbReference type="NCBIfam" id="TIGR00086">
    <property type="entry name" value="smpB"/>
    <property type="match status" value="1"/>
</dbReference>
<dbReference type="PANTHER" id="PTHR30308:SF2">
    <property type="entry name" value="SSRA-BINDING PROTEIN"/>
    <property type="match status" value="1"/>
</dbReference>
<dbReference type="PANTHER" id="PTHR30308">
    <property type="entry name" value="TMRNA-BINDING COMPONENT OF TRANS-TRANSLATION TAGGING COMPLEX"/>
    <property type="match status" value="1"/>
</dbReference>
<dbReference type="Pfam" id="PF01668">
    <property type="entry name" value="SmpB"/>
    <property type="match status" value="1"/>
</dbReference>
<dbReference type="SUPFAM" id="SSF74982">
    <property type="entry name" value="Small protein B (SmpB)"/>
    <property type="match status" value="1"/>
</dbReference>
<dbReference type="PROSITE" id="PS01317">
    <property type="entry name" value="SSRP"/>
    <property type="match status" value="1"/>
</dbReference>
<keyword id="KW-0963">Cytoplasm</keyword>
<keyword id="KW-1185">Reference proteome</keyword>
<keyword id="KW-0694">RNA-binding</keyword>
<sequence length="157" mass="18017">MAEKNERAIKVVAENRKARFNYAIEDTVEAGIALTGTEVKSVRNGKTTIAESYADSKNGEIWLINANIPEYLQANRFNHEPKRPRKLLLHRKQINKLLGAVDREGMTLIPLKLYFNERGRAKLLLAVAKGKKLHDKRESEKKRDWGREKGRLLRARG</sequence>
<reference key="1">
    <citation type="submission" date="2006-03" db="EMBL/GenBank/DDBJ databases">
        <title>Complete sequence of chromosome of Nitrobacter hamburgensis X14.</title>
        <authorList>
            <consortium name="US DOE Joint Genome Institute"/>
            <person name="Copeland A."/>
            <person name="Lucas S."/>
            <person name="Lapidus A."/>
            <person name="Barry K."/>
            <person name="Detter J.C."/>
            <person name="Glavina del Rio T."/>
            <person name="Hammon N."/>
            <person name="Israni S."/>
            <person name="Dalin E."/>
            <person name="Tice H."/>
            <person name="Pitluck S."/>
            <person name="Chain P."/>
            <person name="Malfatti S."/>
            <person name="Shin M."/>
            <person name="Vergez L."/>
            <person name="Schmutz J."/>
            <person name="Larimer F."/>
            <person name="Land M."/>
            <person name="Hauser L."/>
            <person name="Kyrpides N."/>
            <person name="Ivanova N."/>
            <person name="Ward B."/>
            <person name="Arp D."/>
            <person name="Klotz M."/>
            <person name="Stein L."/>
            <person name="O'Mullan G."/>
            <person name="Starkenburg S."/>
            <person name="Sayavedra L."/>
            <person name="Poret-Peterson A.T."/>
            <person name="Gentry M.E."/>
            <person name="Bruce D."/>
            <person name="Richardson P."/>
        </authorList>
    </citation>
    <scope>NUCLEOTIDE SEQUENCE [LARGE SCALE GENOMIC DNA]</scope>
    <source>
        <strain>DSM 10229 / NCIMB 13809 / X14</strain>
    </source>
</reference>
<proteinExistence type="inferred from homology"/>
<name>SSRP_NITHX</name>
<accession>Q1QL45</accession>
<feature type="chain" id="PRO_1000002091" description="SsrA-binding protein">
    <location>
        <begin position="1"/>
        <end position="157"/>
    </location>
</feature>
<feature type="region of interest" description="Disordered" evidence="2">
    <location>
        <begin position="134"/>
        <end position="157"/>
    </location>
</feature>
<feature type="compositionally biased region" description="Basic and acidic residues" evidence="2">
    <location>
        <begin position="135"/>
        <end position="151"/>
    </location>
</feature>
<comment type="function">
    <text evidence="1">Required for rescue of stalled ribosomes mediated by trans-translation. Binds to transfer-messenger RNA (tmRNA), required for stable association of tmRNA with ribosomes. tmRNA and SmpB together mimic tRNA shape, replacing the anticodon stem-loop with SmpB. tmRNA is encoded by the ssrA gene; the 2 termini fold to resemble tRNA(Ala) and it encodes a 'tag peptide', a short internal open reading frame. During trans-translation Ala-aminoacylated tmRNA acts like a tRNA, entering the A-site of stalled ribosomes, displacing the stalled mRNA. The ribosome then switches to translate the ORF on the tmRNA; the nascent peptide is terminated with the 'tag peptide' encoded by the tmRNA and targeted for degradation. The ribosome is freed to recommence translation, which seems to be the essential function of trans-translation.</text>
</comment>
<comment type="subcellular location">
    <subcellularLocation>
        <location evidence="1">Cytoplasm</location>
    </subcellularLocation>
    <text evidence="1">The tmRNA-SmpB complex associates with stalled 70S ribosomes.</text>
</comment>
<comment type="similarity">
    <text evidence="1">Belongs to the SmpB family.</text>
</comment>
<gene>
    <name evidence="1" type="primary">smpB</name>
    <name type="ordered locus">Nham_2260</name>
</gene>